<sequence length="191" mass="21004">MSFVNRIRDIVGLNESLDYDEEYETYDVAADSYNGYNDAAETSSRRRQRNHTPTASIEPVSTASNVIGLPGLSSSSEVVVMEPRSFEEMPQAIQALRERKTIVLNLTMMEPDQAQRAVDFVAGGTFAIDGHQERVGESIFLFTPSCVHVTTQGGEQYLNESPAQPVQTTTSFGRTATPTPAWGTDSRYAAQ</sequence>
<dbReference type="EMBL" id="AP008231">
    <property type="protein sequence ID" value="BAD80224.1"/>
    <property type="status" value="ALT_INIT"/>
    <property type="molecule type" value="Genomic_DNA"/>
</dbReference>
<dbReference type="RefSeq" id="WP_011378295.1">
    <property type="nucleotide sequence ID" value="NZ_CP085785.1"/>
</dbReference>
<dbReference type="SMR" id="Q5N0E6"/>
<dbReference type="KEGG" id="syc:syc2034_d"/>
<dbReference type="eggNOG" id="COG1799">
    <property type="taxonomic scope" value="Bacteria"/>
</dbReference>
<dbReference type="Proteomes" id="UP000001175">
    <property type="component" value="Chromosome"/>
</dbReference>
<dbReference type="GO" id="GO:0005737">
    <property type="term" value="C:cytoplasm"/>
    <property type="evidence" value="ECO:0007669"/>
    <property type="project" value="UniProtKB-SubCell"/>
</dbReference>
<dbReference type="GO" id="GO:0000917">
    <property type="term" value="P:division septum assembly"/>
    <property type="evidence" value="ECO:0007669"/>
    <property type="project" value="UniProtKB-KW"/>
</dbReference>
<dbReference type="GO" id="GO:0043093">
    <property type="term" value="P:FtsZ-dependent cytokinesis"/>
    <property type="evidence" value="ECO:0007669"/>
    <property type="project" value="UniProtKB-UniRule"/>
</dbReference>
<dbReference type="Gene3D" id="3.30.110.150">
    <property type="entry name" value="SepF-like protein"/>
    <property type="match status" value="1"/>
</dbReference>
<dbReference type="HAMAP" id="MF_01197">
    <property type="entry name" value="SepF"/>
    <property type="match status" value="1"/>
</dbReference>
<dbReference type="InterPro" id="IPR023052">
    <property type="entry name" value="Cell_div_SepF"/>
</dbReference>
<dbReference type="InterPro" id="IPR007561">
    <property type="entry name" value="Cell_div_SepF/SepF-rel"/>
</dbReference>
<dbReference type="InterPro" id="IPR038594">
    <property type="entry name" value="SepF-like_sf"/>
</dbReference>
<dbReference type="PANTHER" id="PTHR35798">
    <property type="entry name" value="CELL DIVISION PROTEIN SEPF"/>
    <property type="match status" value="1"/>
</dbReference>
<dbReference type="PANTHER" id="PTHR35798:SF1">
    <property type="entry name" value="CELL DIVISION PROTEIN SEPF"/>
    <property type="match status" value="1"/>
</dbReference>
<dbReference type="Pfam" id="PF04472">
    <property type="entry name" value="SepF"/>
    <property type="match status" value="1"/>
</dbReference>
<feature type="chain" id="PRO_0000334123" description="Cell division protein SepF">
    <location>
        <begin position="1"/>
        <end position="191"/>
    </location>
</feature>
<feature type="region of interest" description="Disordered" evidence="2">
    <location>
        <begin position="157"/>
        <end position="191"/>
    </location>
</feature>
<feature type="compositionally biased region" description="Polar residues" evidence="2">
    <location>
        <begin position="157"/>
        <end position="178"/>
    </location>
</feature>
<gene>
    <name evidence="1" type="primary">sepF</name>
    <name type="ordered locus">syc2034_d</name>
</gene>
<accession>Q5N0E6</accession>
<comment type="function">
    <text evidence="1">Cell division protein that is part of the divisome complex and is recruited early to the Z-ring. Probably stimulates Z-ring formation, perhaps through the cross-linking of FtsZ protofilaments. Its function overlaps with FtsA.</text>
</comment>
<comment type="subunit">
    <text evidence="1">Homodimer. Interacts with FtsZ.</text>
</comment>
<comment type="subcellular location">
    <subcellularLocation>
        <location evidence="1">Cytoplasm</location>
    </subcellularLocation>
    <text evidence="1">Localizes to the division site, in a FtsZ-dependent manner.</text>
</comment>
<comment type="similarity">
    <text evidence="1">Belongs to the SepF family.</text>
</comment>
<comment type="sequence caution" evidence="3">
    <conflict type="erroneous initiation">
        <sequence resource="EMBL-CDS" id="BAD80224"/>
    </conflict>
</comment>
<organism>
    <name type="scientific">Synechococcus sp. (strain ATCC 27144 / PCC 6301 / SAUG 1402/1)</name>
    <name type="common">Anacystis nidulans</name>
    <dbReference type="NCBI Taxonomy" id="269084"/>
    <lineage>
        <taxon>Bacteria</taxon>
        <taxon>Bacillati</taxon>
        <taxon>Cyanobacteriota</taxon>
        <taxon>Cyanophyceae</taxon>
        <taxon>Synechococcales</taxon>
        <taxon>Synechococcaceae</taxon>
        <taxon>Synechococcus</taxon>
    </lineage>
</organism>
<reference key="1">
    <citation type="journal article" date="2007" name="Photosyn. Res.">
        <title>Complete nucleotide sequence of the freshwater unicellular cyanobacterium Synechococcus elongatus PCC 6301 chromosome: gene content and organization.</title>
        <authorList>
            <person name="Sugita C."/>
            <person name="Ogata K."/>
            <person name="Shikata M."/>
            <person name="Jikuya H."/>
            <person name="Takano J."/>
            <person name="Furumichi M."/>
            <person name="Kanehisa M."/>
            <person name="Omata T."/>
            <person name="Sugiura M."/>
            <person name="Sugita M."/>
        </authorList>
    </citation>
    <scope>NUCLEOTIDE SEQUENCE [LARGE SCALE GENOMIC DNA]</scope>
    <source>
        <strain>ATCC 27144 / PCC 6301 / SAUG 1402/1</strain>
    </source>
</reference>
<keyword id="KW-0131">Cell cycle</keyword>
<keyword id="KW-0132">Cell division</keyword>
<keyword id="KW-0963">Cytoplasm</keyword>
<keyword id="KW-0717">Septation</keyword>
<evidence type="ECO:0000255" key="1">
    <source>
        <dbReference type="HAMAP-Rule" id="MF_01197"/>
    </source>
</evidence>
<evidence type="ECO:0000256" key="2">
    <source>
        <dbReference type="SAM" id="MobiDB-lite"/>
    </source>
</evidence>
<evidence type="ECO:0000305" key="3"/>
<protein>
    <recommendedName>
        <fullName evidence="1">Cell division protein SepF</fullName>
    </recommendedName>
</protein>
<proteinExistence type="inferred from homology"/>
<name>SEPF_SYNP6</name>